<sequence>MRRAAGMEDFSAEEEESWYDQQDLEQDLHLAAELGKTLLERNKELEGSLQQMYSTNEEQVQEIEYLTKQLDTLRHVNEQHAKVYEQLDLTARDLELTNHRLVLESKAAQQKIHGLTETIERLQAQVEELQAQVEQLRGLEQLRVLREKRERRRTIHTFPCLKELCTSPRCKDAFRLHSSSLELGPRPLEQENERLQTLVGALRSQVSQERQRKERAEREYTAVLQEYSELERQLCEMEACRLRVQELEAELLELQQMKQAKTYLLGPDDHLAEALLAPLTQAPEADDPQPGRGDDLGAQDGVSSPAASPGHVVRKSCSDTALNAIVAKDPASRHAGNLTLHANSVRKRGMSILREVDEQYHALLEKYEELLSKCRQHGAGVRHAGVQTSRPISRDSSWRDLRGGEEGQGEVKAGEKSLSQHVEAVDKRLEQSQPEYKALFKEIFSRIQKTKADINATKVKTHSSK</sequence>
<feature type="chain" id="PRO_0000307234" description="Cerebellar degeneration-related protein 2-like">
    <location>
        <begin position="1"/>
        <end position="465"/>
    </location>
</feature>
<feature type="region of interest" description="Disordered" evidence="2">
    <location>
        <begin position="282"/>
        <end position="314"/>
    </location>
</feature>
<feature type="region of interest" description="Disordered" evidence="2">
    <location>
        <begin position="382"/>
        <end position="417"/>
    </location>
</feature>
<feature type="coiled-coil region" evidence="1">
    <location>
        <begin position="38"/>
        <end position="143"/>
    </location>
</feature>
<feature type="coiled-coil region" evidence="1">
    <location>
        <begin position="188"/>
        <end position="265"/>
    </location>
</feature>
<feature type="coiled-coil region" evidence="1">
    <location>
        <begin position="350"/>
        <end position="377"/>
    </location>
</feature>
<feature type="compositionally biased region" description="Basic and acidic residues" evidence="2">
    <location>
        <begin position="392"/>
        <end position="405"/>
    </location>
</feature>
<feature type="modified residue" description="Phosphoserine" evidence="4">
    <location>
        <position position="308"/>
    </location>
</feature>
<feature type="modified residue" description="Phosphoserine" evidence="5">
    <location>
        <position position="318"/>
    </location>
</feature>
<feature type="modified residue" description="Phosphoserine" evidence="5">
    <location>
        <position position="344"/>
    </location>
</feature>
<feature type="sequence variant" id="VAR_035384" description="In dbSNP:rs36057512.">
    <original>D</original>
    <variation>E</variation>
    <location>
        <position position="300"/>
    </location>
</feature>
<feature type="sequence conflict" description="In Ref. 1; AAA91850." evidence="3" ref="1">
    <original>H</original>
    <variation>D</variation>
    <location>
        <position position="383"/>
    </location>
</feature>
<dbReference type="EMBL" id="L02867">
    <property type="protein sequence ID" value="AAA91850.1"/>
    <property type="status" value="ALT_FRAME"/>
    <property type="molecule type" value="mRNA"/>
</dbReference>
<dbReference type="EMBL" id="AK294006">
    <property type="protein sequence ID" value="BAG57368.1"/>
    <property type="molecule type" value="mRNA"/>
</dbReference>
<dbReference type="EMBL" id="CH471099">
    <property type="protein sequence ID" value="EAW89224.1"/>
    <property type="molecule type" value="Genomic_DNA"/>
</dbReference>
<dbReference type="EMBL" id="BC047534">
    <property type="protein sequence ID" value="AAH47534.1"/>
    <property type="status" value="ALT_INIT"/>
    <property type="molecule type" value="mRNA"/>
</dbReference>
<dbReference type="CCDS" id="CCDS11710.2"/>
<dbReference type="RefSeq" id="NP_055418.2">
    <property type="nucleotide sequence ID" value="NM_014603.3"/>
</dbReference>
<dbReference type="SMR" id="Q86X02"/>
<dbReference type="BioGRID" id="119060">
    <property type="interactions" value="100"/>
</dbReference>
<dbReference type="FunCoup" id="Q86X02">
    <property type="interactions" value="123"/>
</dbReference>
<dbReference type="IntAct" id="Q86X02">
    <property type="interactions" value="89"/>
</dbReference>
<dbReference type="MINT" id="Q86X02"/>
<dbReference type="STRING" id="9606.ENSP00000336587"/>
<dbReference type="GlyGen" id="Q86X02">
    <property type="glycosylation" value="1 site, 1 O-linked glycan (1 site)"/>
</dbReference>
<dbReference type="iPTMnet" id="Q86X02"/>
<dbReference type="PhosphoSitePlus" id="Q86X02"/>
<dbReference type="BioMuta" id="CDR2L"/>
<dbReference type="DMDM" id="160017566"/>
<dbReference type="jPOST" id="Q86X02"/>
<dbReference type="MassIVE" id="Q86X02"/>
<dbReference type="PaxDb" id="9606-ENSP00000336587"/>
<dbReference type="PeptideAtlas" id="Q86X02"/>
<dbReference type="ProteomicsDB" id="70217"/>
<dbReference type="Pumba" id="Q86X02"/>
<dbReference type="Antibodypedia" id="19492">
    <property type="antibodies" value="100 antibodies from 20 providers"/>
</dbReference>
<dbReference type="DNASU" id="30850"/>
<dbReference type="Ensembl" id="ENST00000337231.5">
    <property type="protein sequence ID" value="ENSP00000336587.5"/>
    <property type="gene ID" value="ENSG00000109089.7"/>
</dbReference>
<dbReference type="GeneID" id="30850"/>
<dbReference type="KEGG" id="hsa:30850"/>
<dbReference type="MANE-Select" id="ENST00000337231.5">
    <property type="protein sequence ID" value="ENSP00000336587.5"/>
    <property type="RefSeq nucleotide sequence ID" value="NM_014603.3"/>
    <property type="RefSeq protein sequence ID" value="NP_055418.2"/>
</dbReference>
<dbReference type="UCSC" id="uc002jml.5">
    <property type="organism name" value="human"/>
</dbReference>
<dbReference type="AGR" id="HGNC:29999"/>
<dbReference type="CTD" id="30850"/>
<dbReference type="DisGeNET" id="30850"/>
<dbReference type="GeneCards" id="CDR2L"/>
<dbReference type="HGNC" id="HGNC:29999">
    <property type="gene designation" value="CDR2L"/>
</dbReference>
<dbReference type="HPA" id="ENSG00000109089">
    <property type="expression patterns" value="Tissue enhanced (brain)"/>
</dbReference>
<dbReference type="neXtProt" id="NX_Q86X02"/>
<dbReference type="OpenTargets" id="ENSG00000109089"/>
<dbReference type="PharmGKB" id="PA142672137"/>
<dbReference type="VEuPathDB" id="HostDB:ENSG00000109089"/>
<dbReference type="eggNOG" id="ENOG502QRN3">
    <property type="taxonomic scope" value="Eukaryota"/>
</dbReference>
<dbReference type="GeneTree" id="ENSGT00390000018570"/>
<dbReference type="HOGENOM" id="CLU_048751_0_0_1"/>
<dbReference type="InParanoid" id="Q86X02"/>
<dbReference type="OMA" id="AGPRTTW"/>
<dbReference type="OrthoDB" id="10059415at2759"/>
<dbReference type="PAN-GO" id="Q86X02">
    <property type="GO annotations" value="0 GO annotations based on evolutionary models"/>
</dbReference>
<dbReference type="PhylomeDB" id="Q86X02"/>
<dbReference type="TreeFam" id="TF326183"/>
<dbReference type="PathwayCommons" id="Q86X02"/>
<dbReference type="SignaLink" id="Q86X02"/>
<dbReference type="BioGRID-ORCS" id="30850">
    <property type="hits" value="17 hits in 1155 CRISPR screens"/>
</dbReference>
<dbReference type="ChiTaRS" id="CDR2L">
    <property type="organism name" value="human"/>
</dbReference>
<dbReference type="GenomeRNAi" id="30850"/>
<dbReference type="Pharos" id="Q86X02">
    <property type="development level" value="Tbio"/>
</dbReference>
<dbReference type="PRO" id="PR:Q86X02"/>
<dbReference type="Proteomes" id="UP000005640">
    <property type="component" value="Chromosome 17"/>
</dbReference>
<dbReference type="RNAct" id="Q86X02">
    <property type="molecule type" value="protein"/>
</dbReference>
<dbReference type="Bgee" id="ENSG00000109089">
    <property type="expression patterns" value="Expressed in inferior vagus X ganglion and 181 other cell types or tissues"/>
</dbReference>
<dbReference type="ExpressionAtlas" id="Q86X02">
    <property type="expression patterns" value="baseline and differential"/>
</dbReference>
<dbReference type="GO" id="GO:0005737">
    <property type="term" value="C:cytoplasm"/>
    <property type="evidence" value="ECO:0007669"/>
    <property type="project" value="GOC"/>
</dbReference>
<dbReference type="GO" id="GO:0042802">
    <property type="term" value="F:identical protein binding"/>
    <property type="evidence" value="ECO:0000353"/>
    <property type="project" value="IntAct"/>
</dbReference>
<dbReference type="GO" id="GO:0055107">
    <property type="term" value="P:Golgi to secretory granule transport"/>
    <property type="evidence" value="ECO:0000318"/>
    <property type="project" value="GO_Central"/>
</dbReference>
<dbReference type="GO" id="GO:0047496">
    <property type="term" value="P:vesicle transport along microtubule"/>
    <property type="evidence" value="ECO:0000318"/>
    <property type="project" value="GO_Central"/>
</dbReference>
<dbReference type="InterPro" id="IPR026079">
    <property type="entry name" value="CDR2"/>
</dbReference>
<dbReference type="PANTHER" id="PTHR19232">
    <property type="entry name" value="CENTROCORTIN FAMILY MEMBER"/>
    <property type="match status" value="1"/>
</dbReference>
<dbReference type="PANTHER" id="PTHR19232:SF10">
    <property type="entry name" value="CEREBELLAR DEGENERATION-RELATED PROTEIN 2-LIKE"/>
    <property type="match status" value="1"/>
</dbReference>
<comment type="interaction">
    <interactant intactId="EBI-11063830">
        <id>Q86X02</id>
    </interactant>
    <interactant intactId="EBI-17183751">
        <id>X5D778</id>
        <label>ANKRD11</label>
    </interactant>
    <organismsDiffer>false</organismsDiffer>
    <experiments>3</experiments>
</comment>
<comment type="interaction">
    <interactant intactId="EBI-11063830">
        <id>Q86X02</id>
    </interactant>
    <interactant intactId="EBI-10229433">
        <id>Q13515</id>
        <label>BFSP2</label>
    </interactant>
    <organismsDiffer>false</organismsDiffer>
    <experiments>6</experiments>
</comment>
<comment type="interaction">
    <interactant intactId="EBI-11063830">
        <id>Q86X02</id>
    </interactant>
    <interactant intactId="EBI-747505">
        <id>Q8TAB5</id>
        <label>C1orf216</label>
    </interactant>
    <organismsDiffer>false</organismsDiffer>
    <experiments>3</experiments>
</comment>
<comment type="interaction">
    <interactant intactId="EBI-11063830">
        <id>Q86X02</id>
    </interactant>
    <interactant intactId="EBI-6657981">
        <id>Q504U0</id>
        <label>C4orf46</label>
    </interactant>
    <organismsDiffer>false</organismsDiffer>
    <experiments>9</experiments>
</comment>
<comment type="interaction">
    <interactant intactId="EBI-11063830">
        <id>Q86X02</id>
    </interactant>
    <interactant intactId="EBI-10749669">
        <id>Q8IYE0</id>
        <label>CCDC146</label>
    </interactant>
    <organismsDiffer>false</organismsDiffer>
    <experiments>3</experiments>
</comment>
<comment type="interaction">
    <interactant intactId="EBI-11063830">
        <id>Q86X02</id>
    </interactant>
    <interactant intactId="EBI-740814">
        <id>Q8N715</id>
        <label>CCDC185</label>
    </interactant>
    <organismsDiffer>false</organismsDiffer>
    <experiments>3</experiments>
</comment>
<comment type="interaction">
    <interactant intactId="EBI-11063830">
        <id>Q86X02</id>
    </interactant>
    <interactant intactId="EBI-10175300">
        <id>Q8TD31-3</id>
        <label>CCHCR1</label>
    </interactant>
    <organismsDiffer>false</organismsDiffer>
    <experiments>3</experiments>
</comment>
<comment type="interaction">
    <interactant intactId="EBI-11063830">
        <id>Q86X02</id>
    </interactant>
    <interactant intactId="EBI-1181367">
        <id>Q01850</id>
        <label>CDR2</label>
    </interactant>
    <organismsDiffer>false</organismsDiffer>
    <experiments>8</experiments>
</comment>
<comment type="interaction">
    <interactant intactId="EBI-11063830">
        <id>Q86X02</id>
    </interactant>
    <interactant intactId="EBI-11063830">
        <id>Q86X02</id>
        <label>CDR2L</label>
    </interactant>
    <organismsDiffer>false</organismsDiffer>
    <experiments>4</experiments>
</comment>
<comment type="interaction">
    <interactant intactId="EBI-11063830">
        <id>Q86X02</id>
    </interactant>
    <interactant intactId="EBI-1053725">
        <id>P10606</id>
        <label>COX5B</label>
    </interactant>
    <organismsDiffer>false</organismsDiffer>
    <experiments>3</experiments>
</comment>
<comment type="interaction">
    <interactant intactId="EBI-11063830">
        <id>Q86X02</id>
    </interactant>
    <interactant intactId="EBI-11974185">
        <id>Q494R4-2</id>
        <label>DRC12</label>
    </interactant>
    <organismsDiffer>false</organismsDiffer>
    <experiments>3</experiments>
</comment>
<comment type="interaction">
    <interactant intactId="EBI-11063830">
        <id>Q86X02</id>
    </interactant>
    <interactant intactId="EBI-2339219">
        <id>Q08426</id>
        <label>EHHADH</label>
    </interactant>
    <organismsDiffer>false</organismsDiffer>
    <experiments>3</experiments>
</comment>
<comment type="interaction">
    <interactant intactId="EBI-11063830">
        <id>Q86X02</id>
    </interactant>
    <interactant intactId="EBI-742350">
        <id>Q14241</id>
        <label>ELOA</label>
    </interactant>
    <organismsDiffer>false</organismsDiffer>
    <experiments>3</experiments>
</comment>
<comment type="interaction">
    <interactant intactId="EBI-11063830">
        <id>Q86X02</id>
    </interactant>
    <interactant intactId="EBI-12039347">
        <id>Q9NVQ4-2</id>
        <label>FAIM</label>
    </interactant>
    <organismsDiffer>false</organismsDiffer>
    <experiments>6</experiments>
</comment>
<comment type="interaction">
    <interactant intactId="EBI-11063830">
        <id>Q86X02</id>
    </interactant>
    <interactant intactId="EBI-719941">
        <id>Q3B820</id>
        <label>FAM161A</label>
    </interactant>
    <organismsDiffer>false</organismsDiffer>
    <experiments>3</experiments>
</comment>
<comment type="interaction">
    <interactant intactId="EBI-11063830">
        <id>Q86X02</id>
    </interactant>
    <interactant intactId="EBI-7225287">
        <id>Q96MY7</id>
        <label>FAM161B</label>
    </interactant>
    <organismsDiffer>false</organismsDiffer>
    <experiments>3</experiments>
</comment>
<comment type="interaction">
    <interactant intactId="EBI-11063830">
        <id>Q86X02</id>
    </interactant>
    <interactant intactId="EBI-12845222">
        <id>Q9NVL1-2</id>
        <label>FAM86C1P</label>
    </interactant>
    <organismsDiffer>false</organismsDiffer>
    <experiments>3</experiments>
</comment>
<comment type="interaction">
    <interactant intactId="EBI-11063830">
        <id>Q86X02</id>
    </interactant>
    <interactant intactId="EBI-11953488">
        <id>P56524-2</id>
        <label>HDAC4</label>
    </interactant>
    <organismsDiffer>false</organismsDiffer>
    <experiments>3</experiments>
</comment>
<comment type="interaction">
    <interactant intactId="EBI-11063830">
        <id>Q86X02</id>
    </interactant>
    <interactant intactId="EBI-7116203">
        <id>O75031</id>
        <label>HSF2BP</label>
    </interactant>
    <organismsDiffer>false</organismsDiffer>
    <experiments>3</experiments>
</comment>
<comment type="interaction">
    <interactant intactId="EBI-11063830">
        <id>Q86X02</id>
    </interactant>
    <interactant intactId="EBI-715611">
        <id>Q9C086</id>
        <label>INO80B</label>
    </interactant>
    <organismsDiffer>false</organismsDiffer>
    <experiments>3</experiments>
</comment>
<comment type="interaction">
    <interactant intactId="EBI-11063830">
        <id>Q86X02</id>
    </interactant>
    <interactant intactId="EBI-948001">
        <id>Q15323</id>
        <label>KRT31</label>
    </interactant>
    <organismsDiffer>false</organismsDiffer>
    <experiments>3</experiments>
</comment>
<comment type="interaction">
    <interactant intactId="EBI-11063830">
        <id>Q86X02</id>
    </interactant>
    <interactant intactId="EBI-11953996">
        <id>Q3LI77</id>
        <label>KRTAP13-4</label>
    </interactant>
    <organismsDiffer>false</organismsDiffer>
    <experiments>3</experiments>
</comment>
<comment type="interaction">
    <interactant intactId="EBI-11063830">
        <id>Q86X02</id>
    </interactant>
    <interactant intactId="EBI-726510">
        <id>Q96BZ8</id>
        <label>LENG1</label>
    </interactant>
    <organismsDiffer>false</organismsDiffer>
    <experiments>3</experiments>
</comment>
<comment type="interaction">
    <interactant intactId="EBI-11063830">
        <id>Q86X02</id>
    </interactant>
    <interactant intactId="EBI-6165891">
        <id>Q14696</id>
        <label>MESD</label>
    </interactant>
    <organismsDiffer>false</organismsDiffer>
    <experiments>3</experiments>
</comment>
<comment type="interaction">
    <interactant intactId="EBI-11063830">
        <id>Q86X02</id>
    </interactant>
    <interactant intactId="EBI-14086479">
        <id>Q8IVT4</id>
        <label>MGC50722</label>
    </interactant>
    <organismsDiffer>false</organismsDiffer>
    <experiments>3</experiments>
</comment>
<comment type="interaction">
    <interactant intactId="EBI-11063830">
        <id>Q86X02</id>
    </interactant>
    <interactant intactId="EBI-536879">
        <id>O43482</id>
        <label>OIP5</label>
    </interactant>
    <organismsDiffer>false</organismsDiffer>
    <experiments>3</experiments>
</comment>
<comment type="interaction">
    <interactant intactId="EBI-11063830">
        <id>Q86X02</id>
    </interactant>
    <interactant intactId="EBI-2557469">
        <id>Q6NYC8</id>
        <label>PPP1R18</label>
    </interactant>
    <organismsDiffer>false</organismsDiffer>
    <experiments>3</experiments>
</comment>
<comment type="interaction">
    <interactant intactId="EBI-11063830">
        <id>Q86X02</id>
    </interactant>
    <interactant intactId="EBI-1567797">
        <id>Q8WWY3</id>
        <label>PRPF31</label>
    </interactant>
    <organismsDiffer>false</organismsDiffer>
    <experiments>3</experiments>
</comment>
<comment type="interaction">
    <interactant intactId="EBI-11063830">
        <id>Q86X02</id>
    </interactant>
    <interactant intactId="EBI-355546">
        <id>P61289</id>
        <label>PSME3</label>
    </interactant>
    <organismsDiffer>false</organismsDiffer>
    <experiments>6</experiments>
</comment>
<comment type="interaction">
    <interactant intactId="EBI-11063830">
        <id>Q86X02</id>
    </interactant>
    <interactant intactId="EBI-3437896">
        <id>Q86YV0</id>
        <label>RASAL3</label>
    </interactant>
    <organismsDiffer>false</organismsDiffer>
    <experiments>3</experiments>
</comment>
<comment type="interaction">
    <interactant intactId="EBI-11063830">
        <id>Q86X02</id>
    </interactant>
    <interactant intactId="EBI-740818">
        <id>Q9Y272</id>
        <label>RASD1</label>
    </interactant>
    <organismsDiffer>false</organismsDiffer>
    <experiments>3</experiments>
</comment>
<comment type="interaction">
    <interactant intactId="EBI-11063830">
        <id>Q86X02</id>
    </interactant>
    <interactant intactId="EBI-10829018">
        <id>Q04864-2</id>
        <label>REL</label>
    </interactant>
    <organismsDiffer>false</organismsDiffer>
    <experiments>3</experiments>
</comment>
<comment type="interaction">
    <interactant intactId="EBI-11063830">
        <id>Q86X02</id>
    </interactant>
    <interactant intactId="EBI-726876">
        <id>Q6NUQ1</id>
        <label>RINT1</label>
    </interactant>
    <organismsDiffer>false</organismsDiffer>
    <experiments>3</experiments>
</comment>
<comment type="interaction">
    <interactant intactId="EBI-11063830">
        <id>Q86X02</id>
    </interactant>
    <interactant intactId="EBI-748391">
        <id>Q9BWG6</id>
        <label>SCNM1</label>
    </interactant>
    <organismsDiffer>false</organismsDiffer>
    <experiments>3</experiments>
</comment>
<comment type="interaction">
    <interactant intactId="EBI-11063830">
        <id>Q86X02</id>
    </interactant>
    <interactant intactId="EBI-747035">
        <id>Q9H788</id>
        <label>SH2D4A</label>
    </interactant>
    <organismsDiffer>false</organismsDiffer>
    <experiments>3</experiments>
</comment>
<comment type="interaction">
    <interactant intactId="EBI-11063830">
        <id>Q86X02</id>
    </interactant>
    <interactant intactId="EBI-10269322">
        <id>Q8NCR6</id>
        <label>SPMIP6</label>
    </interactant>
    <organismsDiffer>false</organismsDiffer>
    <experiments>3</experiments>
</comment>
<comment type="interaction">
    <interactant intactId="EBI-11063830">
        <id>Q86X02</id>
    </interactant>
    <interactant intactId="EBI-3866665">
        <id>O43609</id>
        <label>SPRY1</label>
    </interactant>
    <organismsDiffer>false</organismsDiffer>
    <experiments>3</experiments>
</comment>
<comment type="interaction">
    <interactant intactId="EBI-11063830">
        <id>Q86X02</id>
    </interactant>
    <interactant intactId="EBI-714135">
        <id>O75558</id>
        <label>STX11</label>
    </interactant>
    <organismsDiffer>false</organismsDiffer>
    <experiments>3</experiments>
</comment>
<comment type="interaction">
    <interactant intactId="EBI-11063830">
        <id>Q86X02</id>
    </interactant>
    <interactant intactId="EBI-702328">
        <id>Q969Z0</id>
        <label>TBRG4</label>
    </interactant>
    <organismsDiffer>false</organismsDiffer>
    <experiments>3</experiments>
</comment>
<comment type="interaction">
    <interactant intactId="EBI-11063830">
        <id>Q86X02</id>
    </interactant>
    <interactant intactId="EBI-11955057">
        <id>Q8N8B7-2</id>
        <label>TCEANC</label>
    </interactant>
    <organismsDiffer>false</organismsDiffer>
    <experiments>3</experiments>
</comment>
<comment type="interaction">
    <interactant intactId="EBI-11063830">
        <id>Q86X02</id>
    </interactant>
    <interactant intactId="EBI-740781">
        <id>Q9BT92</id>
        <label>TCHP</label>
    </interactant>
    <organismsDiffer>false</organismsDiffer>
    <experiments>3</experiments>
</comment>
<comment type="interaction">
    <interactant intactId="EBI-11063830">
        <id>Q86X02</id>
    </interactant>
    <interactant intactId="EBI-3923210">
        <id>Q8TDR4</id>
        <label>TCP10L</label>
    </interactant>
    <organismsDiffer>false</organismsDiffer>
    <experiments>3</experiments>
</comment>
<comment type="interaction">
    <interactant intactId="EBI-11063830">
        <id>Q86X02</id>
    </interactant>
    <interactant intactId="EBI-1105213">
        <id>Q9UBB9</id>
        <label>TFIP11</label>
    </interactant>
    <organismsDiffer>false</organismsDiffer>
    <experiments>3</experiments>
</comment>
<comment type="interaction">
    <interactant intactId="EBI-11063830">
        <id>Q86X02</id>
    </interactant>
    <interactant intactId="EBI-10241197">
        <id>Q3SY00</id>
        <label>TSGA10IP</label>
    </interactant>
    <organismsDiffer>false</organismsDiffer>
    <experiments>6</experiments>
</comment>
<comment type="interaction">
    <interactant intactId="EBI-11063830">
        <id>Q86X02</id>
    </interactant>
    <interactant intactId="EBI-10180829">
        <id>Q7KZS0</id>
        <label>UBE2I</label>
    </interactant>
    <organismsDiffer>false</organismsDiffer>
    <experiments>3</experiments>
</comment>
<comment type="interaction">
    <interactant intactId="EBI-11063830">
        <id>Q86X02</id>
    </interactant>
    <interactant intactId="EBI-12287587">
        <id>B2RXF5</id>
        <label>ZBTB42</label>
    </interactant>
    <organismsDiffer>false</organismsDiffer>
    <experiments>3</experiments>
</comment>
<comment type="interaction">
    <interactant intactId="EBI-11063830">
        <id>Q86X02</id>
    </interactant>
    <interactant intactId="EBI-12884200">
        <id>P17023</id>
        <label>ZNF19</label>
    </interactant>
    <organismsDiffer>false</organismsDiffer>
    <experiments>3</experiments>
</comment>
<comment type="interaction">
    <interactant intactId="EBI-11063830">
        <id>Q86X02</id>
    </interactant>
    <interactant intactId="EBI-10177272">
        <id>P15622-3</id>
        <label>ZNF250</label>
    </interactant>
    <organismsDiffer>false</organismsDiffer>
    <experiments>3</experiments>
</comment>
<comment type="interaction">
    <interactant intactId="EBI-11063830">
        <id>Q86X02</id>
    </interactant>
    <interactant intactId="EBI-11041653">
        <id>P13682</id>
        <label>ZNF35</label>
    </interactant>
    <organismsDiffer>false</organismsDiffer>
    <experiments>3</experiments>
</comment>
<comment type="interaction">
    <interactant intactId="EBI-11063830">
        <id>Q86X02</id>
    </interactant>
    <interactant intactId="EBI-740727">
        <id>Q8TAU3</id>
        <label>ZNF417</label>
    </interactant>
    <organismsDiffer>false</organismsDiffer>
    <experiments>3</experiments>
</comment>
<comment type="interaction">
    <interactant intactId="EBI-11063830">
        <id>Q86X02</id>
    </interactant>
    <interactant intactId="EBI-10172590">
        <id>Q7Z3I7</id>
        <label>ZNF572</label>
    </interactant>
    <organismsDiffer>false</organismsDiffer>
    <experiments>3</experiments>
</comment>
<comment type="interaction">
    <interactant intactId="EBI-11063830">
        <id>Q86X02</id>
    </interactant>
    <interactant intactId="EBI-9977294">
        <id>Q9UEG4</id>
        <label>ZNF629</label>
    </interactant>
    <organismsDiffer>false</organismsDiffer>
    <experiments>3</experiments>
</comment>
<comment type="interaction">
    <interactant intactId="EBI-11063830">
        <id>Q86X02</id>
    </interactant>
    <interactant intactId="EBI-11985915">
        <id>Q5T619</id>
        <label>ZNF648</label>
    </interactant>
    <organismsDiffer>false</organismsDiffer>
    <experiments>3</experiments>
</comment>
<comment type="interaction">
    <interactant intactId="EBI-11063830">
        <id>Q86X02</id>
    </interactant>
    <interactant intactId="EBI-625509">
        <id>Q8N720</id>
        <label>ZNF655</label>
    </interactant>
    <organismsDiffer>false</organismsDiffer>
    <experiments>3</experiments>
</comment>
<comment type="interaction">
    <interactant intactId="EBI-11063830">
        <id>Q86X02</id>
    </interactant>
    <interactant intactId="EBI-12006574">
        <id>Q96BR6</id>
        <label>ZNF669</label>
    </interactant>
    <organismsDiffer>false</organismsDiffer>
    <experiments>3</experiments>
</comment>
<comment type="interaction">
    <interactant intactId="EBI-11063830">
        <id>Q86X02</id>
    </interactant>
    <interactant intactId="EBI-4395732">
        <id>P0C7X2</id>
        <label>ZNF688</label>
    </interactant>
    <organismsDiffer>false</organismsDiffer>
    <experiments>3</experiments>
</comment>
<comment type="interaction">
    <interactant intactId="EBI-11063830">
        <id>Q86X02</id>
    </interactant>
    <interactant intactId="EBI-12013828">
        <id>P51504</id>
        <label>ZNF80</label>
    </interactant>
    <organismsDiffer>false</organismsDiffer>
    <experiments>3</experiments>
</comment>
<comment type="interaction">
    <interactant intactId="EBI-11063830">
        <id>Q86X02</id>
    </interactant>
    <interactant intactId="EBI-5667516">
        <id>Q9Y2P0</id>
        <label>ZNF835</label>
    </interactant>
    <organismsDiffer>false</organismsDiffer>
    <experiments>3</experiments>
</comment>
<comment type="interaction">
    <interactant intactId="EBI-11063830">
        <id>Q86X02</id>
    </interactant>
    <interactant intactId="EBI-10178224">
        <id>P10073</id>
        <label>ZSCAN22</label>
    </interactant>
    <organismsDiffer>false</organismsDiffer>
    <experiments>3</experiments>
</comment>
<comment type="interaction">
    <interactant intactId="EBI-11063830">
        <id>Q86X02</id>
    </interactant>
    <interactant intactId="EBI-5667532">
        <id>Q3MJ62</id>
        <label>ZSCAN23</label>
    </interactant>
    <organismsDiffer>false</organismsDiffer>
    <experiments>3</experiments>
</comment>
<comment type="interaction">
    <interactant intactId="EBI-11063830">
        <id>Q86X02</id>
    </interactant>
    <interactant intactId="EBI-3920053">
        <id>Q16670</id>
        <label>ZSCAN26</label>
    </interactant>
    <organismsDiffer>false</organismsDiffer>
    <experiments>3</experiments>
</comment>
<comment type="similarity">
    <text evidence="3">Belongs to the CDR2 family.</text>
</comment>
<comment type="sequence caution" evidence="3">
    <conflict type="frameshift">
        <sequence resource="EMBL-CDS" id="AAA91850"/>
    </conflict>
</comment>
<comment type="sequence caution" evidence="3">
    <conflict type="erroneous initiation">
        <sequence resource="EMBL-CDS" id="AAH47534"/>
    </conflict>
</comment>
<organism>
    <name type="scientific">Homo sapiens</name>
    <name type="common">Human</name>
    <dbReference type="NCBI Taxonomy" id="9606"/>
    <lineage>
        <taxon>Eukaryota</taxon>
        <taxon>Metazoa</taxon>
        <taxon>Chordata</taxon>
        <taxon>Craniata</taxon>
        <taxon>Vertebrata</taxon>
        <taxon>Euteleostomi</taxon>
        <taxon>Mammalia</taxon>
        <taxon>Eutheria</taxon>
        <taxon>Euarchontoglires</taxon>
        <taxon>Primates</taxon>
        <taxon>Haplorrhini</taxon>
        <taxon>Catarrhini</taxon>
        <taxon>Hominidae</taxon>
        <taxon>Homo</taxon>
    </lineage>
</organism>
<evidence type="ECO:0000255" key="1"/>
<evidence type="ECO:0000256" key="2">
    <source>
        <dbReference type="SAM" id="MobiDB-lite"/>
    </source>
</evidence>
<evidence type="ECO:0000305" key="3"/>
<evidence type="ECO:0007744" key="4">
    <source>
    </source>
</evidence>
<evidence type="ECO:0007744" key="5">
    <source>
    </source>
</evidence>
<reference key="1">
    <citation type="submission" date="1996-03" db="EMBL/GenBank/DDBJ databases">
        <title>Cloning and characterization of a second leucine zipper protein recognized by the sera of the patients with antibody associated paraneoplastic cerebellar degeneration.</title>
        <authorList>
            <person name="Fathallah-Shaykh H.M."/>
            <person name="Finizio J."/>
            <person name="Ho A."/>
            <person name="Rosenblum M."/>
            <person name="Posner J."/>
        </authorList>
    </citation>
    <scope>NUCLEOTIDE SEQUENCE [MRNA]</scope>
</reference>
<reference key="2">
    <citation type="journal article" date="2004" name="Nat. Genet.">
        <title>Complete sequencing and characterization of 21,243 full-length human cDNAs.</title>
        <authorList>
            <person name="Ota T."/>
            <person name="Suzuki Y."/>
            <person name="Nishikawa T."/>
            <person name="Otsuki T."/>
            <person name="Sugiyama T."/>
            <person name="Irie R."/>
            <person name="Wakamatsu A."/>
            <person name="Hayashi K."/>
            <person name="Sato H."/>
            <person name="Nagai K."/>
            <person name="Kimura K."/>
            <person name="Makita H."/>
            <person name="Sekine M."/>
            <person name="Obayashi M."/>
            <person name="Nishi T."/>
            <person name="Shibahara T."/>
            <person name="Tanaka T."/>
            <person name="Ishii S."/>
            <person name="Yamamoto J."/>
            <person name="Saito K."/>
            <person name="Kawai Y."/>
            <person name="Isono Y."/>
            <person name="Nakamura Y."/>
            <person name="Nagahari K."/>
            <person name="Murakami K."/>
            <person name="Yasuda T."/>
            <person name="Iwayanagi T."/>
            <person name="Wagatsuma M."/>
            <person name="Shiratori A."/>
            <person name="Sudo H."/>
            <person name="Hosoiri T."/>
            <person name="Kaku Y."/>
            <person name="Kodaira H."/>
            <person name="Kondo H."/>
            <person name="Sugawara M."/>
            <person name="Takahashi M."/>
            <person name="Kanda K."/>
            <person name="Yokoi T."/>
            <person name="Furuya T."/>
            <person name="Kikkawa E."/>
            <person name="Omura Y."/>
            <person name="Abe K."/>
            <person name="Kamihara K."/>
            <person name="Katsuta N."/>
            <person name="Sato K."/>
            <person name="Tanikawa M."/>
            <person name="Yamazaki M."/>
            <person name="Ninomiya K."/>
            <person name="Ishibashi T."/>
            <person name="Yamashita H."/>
            <person name="Murakawa K."/>
            <person name="Fujimori K."/>
            <person name="Tanai H."/>
            <person name="Kimata M."/>
            <person name="Watanabe M."/>
            <person name="Hiraoka S."/>
            <person name="Chiba Y."/>
            <person name="Ishida S."/>
            <person name="Ono Y."/>
            <person name="Takiguchi S."/>
            <person name="Watanabe S."/>
            <person name="Yosida M."/>
            <person name="Hotuta T."/>
            <person name="Kusano J."/>
            <person name="Kanehori K."/>
            <person name="Takahashi-Fujii A."/>
            <person name="Hara H."/>
            <person name="Tanase T.-O."/>
            <person name="Nomura Y."/>
            <person name="Togiya S."/>
            <person name="Komai F."/>
            <person name="Hara R."/>
            <person name="Takeuchi K."/>
            <person name="Arita M."/>
            <person name="Imose N."/>
            <person name="Musashino K."/>
            <person name="Yuuki H."/>
            <person name="Oshima A."/>
            <person name="Sasaki N."/>
            <person name="Aotsuka S."/>
            <person name="Yoshikawa Y."/>
            <person name="Matsunawa H."/>
            <person name="Ichihara T."/>
            <person name="Shiohata N."/>
            <person name="Sano S."/>
            <person name="Moriya S."/>
            <person name="Momiyama H."/>
            <person name="Satoh N."/>
            <person name="Takami S."/>
            <person name="Terashima Y."/>
            <person name="Suzuki O."/>
            <person name="Nakagawa S."/>
            <person name="Senoh A."/>
            <person name="Mizoguchi H."/>
            <person name="Goto Y."/>
            <person name="Shimizu F."/>
            <person name="Wakebe H."/>
            <person name="Hishigaki H."/>
            <person name="Watanabe T."/>
            <person name="Sugiyama A."/>
            <person name="Takemoto M."/>
            <person name="Kawakami B."/>
            <person name="Yamazaki M."/>
            <person name="Watanabe K."/>
            <person name="Kumagai A."/>
            <person name="Itakura S."/>
            <person name="Fukuzumi Y."/>
            <person name="Fujimori Y."/>
            <person name="Komiyama M."/>
            <person name="Tashiro H."/>
            <person name="Tanigami A."/>
            <person name="Fujiwara T."/>
            <person name="Ono T."/>
            <person name="Yamada K."/>
            <person name="Fujii Y."/>
            <person name="Ozaki K."/>
            <person name="Hirao M."/>
            <person name="Ohmori Y."/>
            <person name="Kawabata A."/>
            <person name="Hikiji T."/>
            <person name="Kobatake N."/>
            <person name="Inagaki H."/>
            <person name="Ikema Y."/>
            <person name="Okamoto S."/>
            <person name="Okitani R."/>
            <person name="Kawakami T."/>
            <person name="Noguchi S."/>
            <person name="Itoh T."/>
            <person name="Shigeta K."/>
            <person name="Senba T."/>
            <person name="Matsumura K."/>
            <person name="Nakajima Y."/>
            <person name="Mizuno T."/>
            <person name="Morinaga M."/>
            <person name="Sasaki M."/>
            <person name="Togashi T."/>
            <person name="Oyama M."/>
            <person name="Hata H."/>
            <person name="Watanabe M."/>
            <person name="Komatsu T."/>
            <person name="Mizushima-Sugano J."/>
            <person name="Satoh T."/>
            <person name="Shirai Y."/>
            <person name="Takahashi Y."/>
            <person name="Nakagawa K."/>
            <person name="Okumura K."/>
            <person name="Nagase T."/>
            <person name="Nomura N."/>
            <person name="Kikuchi H."/>
            <person name="Masuho Y."/>
            <person name="Yamashita R."/>
            <person name="Nakai K."/>
            <person name="Yada T."/>
            <person name="Nakamura Y."/>
            <person name="Ohara O."/>
            <person name="Isogai T."/>
            <person name="Sugano S."/>
        </authorList>
    </citation>
    <scope>NUCLEOTIDE SEQUENCE [LARGE SCALE MRNA]</scope>
    <source>
        <tissue>Cerebellum</tissue>
    </source>
</reference>
<reference key="3">
    <citation type="submission" date="2005-07" db="EMBL/GenBank/DDBJ databases">
        <authorList>
            <person name="Mural R.J."/>
            <person name="Istrail S."/>
            <person name="Sutton G.G."/>
            <person name="Florea L."/>
            <person name="Halpern A.L."/>
            <person name="Mobarry C.M."/>
            <person name="Lippert R."/>
            <person name="Walenz B."/>
            <person name="Shatkay H."/>
            <person name="Dew I."/>
            <person name="Miller J.R."/>
            <person name="Flanigan M.J."/>
            <person name="Edwards N.J."/>
            <person name="Bolanos R."/>
            <person name="Fasulo D."/>
            <person name="Halldorsson B.V."/>
            <person name="Hannenhalli S."/>
            <person name="Turner R."/>
            <person name="Yooseph S."/>
            <person name="Lu F."/>
            <person name="Nusskern D.R."/>
            <person name="Shue B.C."/>
            <person name="Zheng X.H."/>
            <person name="Zhong F."/>
            <person name="Delcher A.L."/>
            <person name="Huson D.H."/>
            <person name="Kravitz S.A."/>
            <person name="Mouchard L."/>
            <person name="Reinert K."/>
            <person name="Remington K.A."/>
            <person name="Clark A.G."/>
            <person name="Waterman M.S."/>
            <person name="Eichler E.E."/>
            <person name="Adams M.D."/>
            <person name="Hunkapiller M.W."/>
            <person name="Myers E.W."/>
            <person name="Venter J.C."/>
        </authorList>
    </citation>
    <scope>NUCLEOTIDE SEQUENCE [LARGE SCALE GENOMIC DNA]</scope>
</reference>
<reference key="4">
    <citation type="journal article" date="2004" name="Genome Res.">
        <title>The status, quality, and expansion of the NIH full-length cDNA project: the Mammalian Gene Collection (MGC).</title>
        <authorList>
            <consortium name="The MGC Project Team"/>
        </authorList>
    </citation>
    <scope>NUCLEOTIDE SEQUENCE [LARGE SCALE MRNA]</scope>
    <source>
        <tissue>Brain</tissue>
    </source>
</reference>
<reference key="5">
    <citation type="journal article" date="2008" name="J. Proteome Res.">
        <title>Combining protein-based IMAC, peptide-based IMAC, and MudPIT for efficient phosphoproteomic analysis.</title>
        <authorList>
            <person name="Cantin G.T."/>
            <person name="Yi W."/>
            <person name="Lu B."/>
            <person name="Park S.K."/>
            <person name="Xu T."/>
            <person name="Lee J.-D."/>
            <person name="Yates J.R. III"/>
        </authorList>
    </citation>
    <scope>PHOSPHORYLATION [LARGE SCALE ANALYSIS] AT SER-308</scope>
    <scope>IDENTIFICATION BY MASS SPECTROMETRY [LARGE SCALE ANALYSIS]</scope>
    <source>
        <tissue>Cervix carcinoma</tissue>
    </source>
</reference>
<reference key="6">
    <citation type="journal article" date="2013" name="J. Proteome Res.">
        <title>Toward a comprehensive characterization of a human cancer cell phosphoproteome.</title>
        <authorList>
            <person name="Zhou H."/>
            <person name="Di Palma S."/>
            <person name="Preisinger C."/>
            <person name="Peng M."/>
            <person name="Polat A.N."/>
            <person name="Heck A.J."/>
            <person name="Mohammed S."/>
        </authorList>
    </citation>
    <scope>PHOSPHORYLATION [LARGE SCALE ANALYSIS] AT SER-318 AND SER-344</scope>
    <scope>IDENTIFICATION BY MASS SPECTROMETRY [LARGE SCALE ANALYSIS]</scope>
    <source>
        <tissue>Cervix carcinoma</tissue>
        <tissue>Erythroleukemia</tissue>
    </source>
</reference>
<protein>
    <recommendedName>
        <fullName>Cerebellar degeneration-related protein 2-like</fullName>
    </recommendedName>
    <alternativeName>
        <fullName>Paraneoplastic 62 kDa antigen</fullName>
    </alternativeName>
</protein>
<proteinExistence type="evidence at protein level"/>
<gene>
    <name type="primary">CDR2L</name>
    <name type="synonym">HUMPPA</name>
</gene>
<keyword id="KW-0175">Coiled coil</keyword>
<keyword id="KW-0597">Phosphoprotein</keyword>
<keyword id="KW-1267">Proteomics identification</keyword>
<keyword id="KW-1185">Reference proteome</keyword>
<name>CDR2L_HUMAN</name>
<accession>Q86X02</accession>
<accession>B4DFA7</accession>
<accession>Q15175</accession>